<gene>
    <name evidence="1" type="primary">xseA</name>
    <name type="ordered locus">XC_1812</name>
</gene>
<organism>
    <name type="scientific">Xanthomonas campestris pv. campestris (strain 8004)</name>
    <dbReference type="NCBI Taxonomy" id="314565"/>
    <lineage>
        <taxon>Bacteria</taxon>
        <taxon>Pseudomonadati</taxon>
        <taxon>Pseudomonadota</taxon>
        <taxon>Gammaproteobacteria</taxon>
        <taxon>Lysobacterales</taxon>
        <taxon>Lysobacteraceae</taxon>
        <taxon>Xanthomonas</taxon>
    </lineage>
</organism>
<feature type="chain" id="PRO_0000273701" description="Exodeoxyribonuclease 7 large subunit">
    <location>
        <begin position="1"/>
        <end position="446"/>
    </location>
</feature>
<reference key="1">
    <citation type="journal article" date="2005" name="Genome Res.">
        <title>Comparative and functional genomic analyses of the pathogenicity of phytopathogen Xanthomonas campestris pv. campestris.</title>
        <authorList>
            <person name="Qian W."/>
            <person name="Jia Y."/>
            <person name="Ren S.-X."/>
            <person name="He Y.-Q."/>
            <person name="Feng J.-X."/>
            <person name="Lu L.-F."/>
            <person name="Sun Q."/>
            <person name="Ying G."/>
            <person name="Tang D.-J."/>
            <person name="Tang H."/>
            <person name="Wu W."/>
            <person name="Hao P."/>
            <person name="Wang L."/>
            <person name="Jiang B.-L."/>
            <person name="Zeng S."/>
            <person name="Gu W.-Y."/>
            <person name="Lu G."/>
            <person name="Rong L."/>
            <person name="Tian Y."/>
            <person name="Yao Z."/>
            <person name="Fu G."/>
            <person name="Chen B."/>
            <person name="Fang R."/>
            <person name="Qiang B."/>
            <person name="Chen Z."/>
            <person name="Zhao G.-P."/>
            <person name="Tang J.-L."/>
            <person name="He C."/>
        </authorList>
    </citation>
    <scope>NUCLEOTIDE SEQUENCE [LARGE SCALE GENOMIC DNA]</scope>
    <source>
        <strain>8004</strain>
    </source>
</reference>
<evidence type="ECO:0000255" key="1">
    <source>
        <dbReference type="HAMAP-Rule" id="MF_00378"/>
    </source>
</evidence>
<keyword id="KW-0963">Cytoplasm</keyword>
<keyword id="KW-0269">Exonuclease</keyword>
<keyword id="KW-0378">Hydrolase</keyword>
<keyword id="KW-0540">Nuclease</keyword>
<accession>Q4UVP8</accession>
<proteinExistence type="inferred from homology"/>
<protein>
    <recommendedName>
        <fullName evidence="1">Exodeoxyribonuclease 7 large subunit</fullName>
        <ecNumber evidence="1">3.1.11.6</ecNumber>
    </recommendedName>
    <alternativeName>
        <fullName evidence="1">Exodeoxyribonuclease VII large subunit</fullName>
        <shortName evidence="1">Exonuclease VII large subunit</shortName>
    </alternativeName>
</protein>
<name>EX7L_XANC8</name>
<sequence>MADRTEQILTPSQLNTLARDLLEGSFPLVWVEAELGNVTRPASGHLYFTLKDARAQIRCAMFKPKSTWLKFQPREGLRVLARGRLTLYEARGDYQLVLDHMEEAGEGALRRAFEELRARLAAEGVFDAERKQPLPAHVRRLAVITSPSGAAVRDVLSVLARRFPLLEVDILPSLVQGDSAAAQITSLLQRADASGRYDVILITRGGGSLEDLWAFNDERLARAIAAAHTPVVSAVGHETDVSLSDFAADVRAPTPSVAAELLVPDQRELVARVRRAQARLSQLQQHTLGQAMQHADRLALRLRARSPQARLQLLQRRQEDAARHLRARMQHILERLQARVQRAQAGVQSHSPQRHLAPLQQRLRAAHPQAAMQRRLQQDHLHLRGLVRSLEAVSPLATVARGYAIVTRQADGSVVRSAAELTQGDRLRAQLADGSVTVVVDTSETG</sequence>
<dbReference type="EC" id="3.1.11.6" evidence="1"/>
<dbReference type="EMBL" id="CP000050">
    <property type="protein sequence ID" value="AAY48875.1"/>
    <property type="molecule type" value="Genomic_DNA"/>
</dbReference>
<dbReference type="RefSeq" id="WP_011037447.1">
    <property type="nucleotide sequence ID" value="NZ_CP155948.1"/>
</dbReference>
<dbReference type="SMR" id="Q4UVP8"/>
<dbReference type="KEGG" id="xcb:XC_1812"/>
<dbReference type="HOGENOM" id="CLU_023625_3_1_6"/>
<dbReference type="Proteomes" id="UP000000420">
    <property type="component" value="Chromosome"/>
</dbReference>
<dbReference type="GO" id="GO:0005737">
    <property type="term" value="C:cytoplasm"/>
    <property type="evidence" value="ECO:0007669"/>
    <property type="project" value="UniProtKB-SubCell"/>
</dbReference>
<dbReference type="GO" id="GO:0009318">
    <property type="term" value="C:exodeoxyribonuclease VII complex"/>
    <property type="evidence" value="ECO:0007669"/>
    <property type="project" value="InterPro"/>
</dbReference>
<dbReference type="GO" id="GO:0008855">
    <property type="term" value="F:exodeoxyribonuclease VII activity"/>
    <property type="evidence" value="ECO:0007669"/>
    <property type="project" value="UniProtKB-UniRule"/>
</dbReference>
<dbReference type="GO" id="GO:0003676">
    <property type="term" value="F:nucleic acid binding"/>
    <property type="evidence" value="ECO:0007669"/>
    <property type="project" value="InterPro"/>
</dbReference>
<dbReference type="GO" id="GO:0006308">
    <property type="term" value="P:DNA catabolic process"/>
    <property type="evidence" value="ECO:0007669"/>
    <property type="project" value="UniProtKB-UniRule"/>
</dbReference>
<dbReference type="CDD" id="cd04489">
    <property type="entry name" value="ExoVII_LU_OBF"/>
    <property type="match status" value="1"/>
</dbReference>
<dbReference type="HAMAP" id="MF_00378">
    <property type="entry name" value="Exonuc_7_L"/>
    <property type="match status" value="1"/>
</dbReference>
<dbReference type="InterPro" id="IPR003753">
    <property type="entry name" value="Exonuc_VII_L"/>
</dbReference>
<dbReference type="InterPro" id="IPR020579">
    <property type="entry name" value="Exonuc_VII_lsu_C"/>
</dbReference>
<dbReference type="InterPro" id="IPR025824">
    <property type="entry name" value="OB-fold_nuc-bd_dom"/>
</dbReference>
<dbReference type="NCBIfam" id="TIGR00237">
    <property type="entry name" value="xseA"/>
    <property type="match status" value="1"/>
</dbReference>
<dbReference type="PANTHER" id="PTHR30008">
    <property type="entry name" value="EXODEOXYRIBONUCLEASE 7 LARGE SUBUNIT"/>
    <property type="match status" value="1"/>
</dbReference>
<dbReference type="PANTHER" id="PTHR30008:SF0">
    <property type="entry name" value="EXODEOXYRIBONUCLEASE 7 LARGE SUBUNIT"/>
    <property type="match status" value="1"/>
</dbReference>
<dbReference type="Pfam" id="PF02601">
    <property type="entry name" value="Exonuc_VII_L"/>
    <property type="match status" value="1"/>
</dbReference>
<dbReference type="Pfam" id="PF13742">
    <property type="entry name" value="tRNA_anti_2"/>
    <property type="match status" value="1"/>
</dbReference>
<comment type="function">
    <text evidence="1">Bidirectionally degrades single-stranded DNA into large acid-insoluble oligonucleotides, which are then degraded further into small acid-soluble oligonucleotides.</text>
</comment>
<comment type="catalytic activity">
    <reaction evidence="1">
        <text>Exonucleolytic cleavage in either 5'- to 3'- or 3'- to 5'-direction to yield nucleoside 5'-phosphates.</text>
        <dbReference type="EC" id="3.1.11.6"/>
    </reaction>
</comment>
<comment type="subunit">
    <text evidence="1">Heterooligomer composed of large and small subunits.</text>
</comment>
<comment type="subcellular location">
    <subcellularLocation>
        <location evidence="1">Cytoplasm</location>
    </subcellularLocation>
</comment>
<comment type="similarity">
    <text evidence="1">Belongs to the XseA family.</text>
</comment>